<feature type="signal peptide" description="Tat-type signal" evidence="2">
    <location>
        <begin position="1"/>
        <end position="35"/>
    </location>
</feature>
<feature type="chain" id="PRO_0000278544" description="Deferrochelatase">
    <location>
        <begin position="36"/>
        <end position="423"/>
    </location>
</feature>
<feature type="binding site" evidence="4 7">
    <location>
        <begin position="236"/>
        <end position="238"/>
    </location>
    <ligand>
        <name>heme b</name>
        <dbReference type="ChEBI" id="CHEBI:60344"/>
    </ligand>
</feature>
<feature type="binding site" description="proximal binding residue" evidence="4 7">
    <location>
        <position position="329"/>
    </location>
    <ligand>
        <name>heme b</name>
        <dbReference type="ChEBI" id="CHEBI:60344"/>
    </ligand>
    <ligandPart>
        <name>Fe</name>
        <dbReference type="ChEBI" id="CHEBI:18248"/>
    </ligandPart>
</feature>
<feature type="binding site" evidence="4 7">
    <location>
        <begin position="334"/>
        <end position="336"/>
    </location>
    <ligand>
        <name>heme b</name>
        <dbReference type="ChEBI" id="CHEBI:60344"/>
    </ligand>
</feature>
<feature type="binding site" evidence="4 7">
    <location>
        <position position="347"/>
    </location>
    <ligand>
        <name>heme b</name>
        <dbReference type="ChEBI" id="CHEBI:60344"/>
    </ligand>
</feature>
<feature type="mutagenesis site" description="Loss of deferrochelatase activity." evidence="4">
    <original>Q</original>
    <variation>W</variation>
    <location>
        <position position="68"/>
    </location>
</feature>
<feature type="mutagenesis site" description="Loss of deferrochelatase activity." evidence="4">
    <original>G</original>
    <variation>F</variation>
    <location>
        <position position="223"/>
    </location>
</feature>
<feature type="mutagenesis site" description="Loss of deferrochelatase activity." evidence="4">
    <original>P</original>
    <variation>F</variation>
    <location>
        <position position="227"/>
    </location>
</feature>
<feature type="mutagenesis site" description="Large decrease in deferrochelatase activity and peroxidase activity on guaiacol and catechol. Still binds heme." evidence="4">
    <original>D</original>
    <variation>A</variation>
    <location>
        <position position="235"/>
    </location>
</feature>
<feature type="mutagenesis site" description="No effect on deferrochelatase activity. No effect on peroxidase activity on guaiacol, but loss of peroxidase activity on catechol. Still binds heme." evidence="4">
    <original>D</original>
    <variation>N</variation>
    <location>
        <position position="235"/>
    </location>
</feature>
<feature type="mutagenesis site" description="Loss of deferrochelatase activity." evidence="4">
    <original>D</original>
    <variation>W</variation>
    <location>
        <position position="235"/>
    </location>
</feature>
<feature type="mutagenesis site" description="Loss of deferrochelatase activity." evidence="4">
    <original>G</original>
    <variation>F</variation>
    <location>
        <position position="236"/>
    </location>
</feature>
<feature type="mutagenesis site" description="Loss of deferrochelatase activity." evidence="4">
    <original>N</original>
    <variation>W</variation>
    <location>
        <position position="239"/>
    </location>
</feature>
<feature type="mutagenesis site" description="Loss of deferrochelatase activity. Great decrease in peroxidase activity on guaiacol, and loss of peroxidase activity on catechol. Still binds heme." evidence="4">
    <original>H</original>
    <variation>A</variation>
    <location>
        <position position="329"/>
    </location>
</feature>
<feature type="mutagenesis site" description="Loss of deferrochelatase activity." evidence="4">
    <original>L</original>
    <variation>W</variation>
    <location>
        <position position="346"/>
    </location>
</feature>
<feature type="mutagenesis site" description="Loss of deferrochelatase activity. Great decrease in peroxidase activity on guaiacol, and loss of peroxidase activity on catechol. Still binds heme." evidence="4">
    <original>R</original>
    <variation>E</variation>
    <location>
        <position position="347"/>
    </location>
</feature>
<feature type="mutagenesis site" description="Loss of deferrochelatase activity." evidence="4">
    <original>G</original>
    <variation>F</variation>
    <location>
        <position position="349"/>
    </location>
</feature>
<feature type="mutagenesis site" description="Loss of deferrochelatase activity. Great decrease in peroxidase activity on guaiacol and catechol. Still binds heme." evidence="4">
    <original>G</original>
    <variation>L</variation>
    <location>
        <position position="349"/>
    </location>
</feature>
<feature type="mutagenesis site" description="Large decrease in deferrochelatase activity." evidence="4">
    <original>S</original>
    <variation>Q</variation>
    <location>
        <position position="351"/>
    </location>
</feature>
<feature type="mutagenesis site" description="Loss of deferrochelatase activity." evidence="4">
    <original>L</original>
    <variation>W</variation>
    <location>
        <position position="366"/>
    </location>
</feature>
<feature type="mutagenesis site" description="Loss of deferrochelatase activity." evidence="4">
    <original>F</original>
    <variation>W</variation>
    <location>
        <position position="368"/>
    </location>
</feature>
<feature type="helix" evidence="8">
    <location>
        <begin position="49"/>
        <end position="51"/>
    </location>
</feature>
<feature type="strand" evidence="8">
    <location>
        <begin position="58"/>
        <end position="60"/>
    </location>
</feature>
<feature type="strand" evidence="8">
    <location>
        <begin position="62"/>
        <end position="66"/>
    </location>
</feature>
<feature type="strand" evidence="8">
    <location>
        <begin position="70"/>
        <end position="79"/>
    </location>
</feature>
<feature type="helix" evidence="8">
    <location>
        <begin position="84"/>
        <end position="103"/>
    </location>
</feature>
<feature type="strand" evidence="8">
    <location>
        <begin position="125"/>
        <end position="127"/>
    </location>
</feature>
<feature type="strand" evidence="8">
    <location>
        <begin position="133"/>
        <end position="139"/>
    </location>
</feature>
<feature type="helix" evidence="8">
    <location>
        <begin position="140"/>
        <end position="143"/>
    </location>
</feature>
<feature type="turn" evidence="8">
    <location>
        <begin position="145"/>
        <end position="148"/>
    </location>
</feature>
<feature type="helix" evidence="8">
    <location>
        <begin position="150"/>
        <end position="152"/>
    </location>
</feature>
<feature type="helix" evidence="8">
    <location>
        <begin position="170"/>
        <end position="172"/>
    </location>
</feature>
<feature type="strand" evidence="8">
    <location>
        <begin position="176"/>
        <end position="185"/>
    </location>
</feature>
<feature type="helix" evidence="8">
    <location>
        <begin position="186"/>
        <end position="198"/>
    </location>
</feature>
<feature type="turn" evidence="8">
    <location>
        <begin position="201"/>
        <end position="203"/>
    </location>
</feature>
<feature type="strand" evidence="8">
    <location>
        <begin position="204"/>
        <end position="213"/>
    </location>
</feature>
<feature type="helix" evidence="8">
    <location>
        <begin position="216"/>
        <end position="220"/>
    </location>
</feature>
<feature type="turn" evidence="8">
    <location>
        <begin position="221"/>
        <end position="223"/>
    </location>
</feature>
<feature type="helix" evidence="8">
    <location>
        <begin position="245"/>
        <end position="251"/>
    </location>
</feature>
<feature type="strand" evidence="8">
    <location>
        <begin position="258"/>
        <end position="260"/>
    </location>
</feature>
<feature type="helix" evidence="8">
    <location>
        <begin position="262"/>
        <end position="264"/>
    </location>
</feature>
<feature type="strand" evidence="8">
    <location>
        <begin position="268"/>
        <end position="277"/>
    </location>
</feature>
<feature type="helix" evidence="8">
    <location>
        <begin position="279"/>
        <end position="283"/>
    </location>
</feature>
<feature type="helix" evidence="8">
    <location>
        <begin position="287"/>
        <end position="294"/>
    </location>
</feature>
<feature type="turn" evidence="8">
    <location>
        <begin position="298"/>
        <end position="300"/>
    </location>
</feature>
<feature type="strand" evidence="8">
    <location>
        <begin position="322"/>
        <end position="324"/>
    </location>
</feature>
<feature type="helix" evidence="8">
    <location>
        <begin position="329"/>
        <end position="333"/>
    </location>
</feature>
<feature type="helix" evidence="8">
    <location>
        <begin position="338"/>
        <end position="343"/>
    </location>
</feature>
<feature type="strand" evidence="8">
    <location>
        <begin position="350"/>
        <end position="356"/>
    </location>
</feature>
<feature type="strand" evidence="8">
    <location>
        <begin position="362"/>
        <end position="373"/>
    </location>
</feature>
<feature type="turn" evidence="8">
    <location>
        <begin position="375"/>
        <end position="378"/>
    </location>
</feature>
<feature type="helix" evidence="8">
    <location>
        <begin position="379"/>
        <end position="386"/>
    </location>
</feature>
<feature type="helix" evidence="8">
    <location>
        <begin position="390"/>
        <end position="394"/>
    </location>
</feature>
<feature type="strand" evidence="8">
    <location>
        <begin position="395"/>
        <end position="405"/>
    </location>
</feature>
<feature type="helix" evidence="8">
    <location>
        <begin position="418"/>
        <end position="421"/>
    </location>
</feature>
<organism>
    <name type="scientific">Escherichia coli O157:H7</name>
    <dbReference type="NCBI Taxonomy" id="83334"/>
    <lineage>
        <taxon>Bacteria</taxon>
        <taxon>Pseudomonadati</taxon>
        <taxon>Pseudomonadota</taxon>
        <taxon>Gammaproteobacteria</taxon>
        <taxon>Enterobacterales</taxon>
        <taxon>Enterobacteriaceae</taxon>
        <taxon>Escherichia</taxon>
    </lineage>
</organism>
<accession>Q8XAS4</accession>
<accession>Q7AFM4</accession>
<keyword id="KW-0002">3D-structure</keyword>
<keyword id="KW-0349">Heme</keyword>
<keyword id="KW-0408">Iron</keyword>
<keyword id="KW-0456">Lyase</keyword>
<keyword id="KW-0479">Metal-binding</keyword>
<keyword id="KW-0560">Oxidoreductase</keyword>
<keyword id="KW-0574">Periplasm</keyword>
<keyword id="KW-0575">Peroxidase</keyword>
<keyword id="KW-1185">Reference proteome</keyword>
<keyword id="KW-0732">Signal</keyword>
<protein>
    <recommendedName>
        <fullName evidence="6">Deferrochelatase</fullName>
        <ecNumber evidence="4">4.98.1.1</ecNumber>
    </recommendedName>
    <alternativeName>
        <fullName evidence="6">Peroxidase EfeB</fullName>
        <ecNumber evidence="4">1.11.1.-</ecNumber>
    </alternativeName>
</protein>
<dbReference type="EC" id="4.98.1.1" evidence="4"/>
<dbReference type="EC" id="1.11.1.-" evidence="4"/>
<dbReference type="EMBL" id="AE005174">
    <property type="protein sequence ID" value="AAG55637.1"/>
    <property type="molecule type" value="Genomic_DNA"/>
</dbReference>
<dbReference type="EMBL" id="BA000007">
    <property type="protein sequence ID" value="BAB34688.1"/>
    <property type="molecule type" value="Genomic_DNA"/>
</dbReference>
<dbReference type="PIR" id="A85647">
    <property type="entry name" value="A85647"/>
</dbReference>
<dbReference type="PIR" id="A99787">
    <property type="entry name" value="A99787"/>
</dbReference>
<dbReference type="RefSeq" id="NP_309292.1">
    <property type="nucleotide sequence ID" value="NC_002695.1"/>
</dbReference>
<dbReference type="RefSeq" id="WP_001199176.1">
    <property type="nucleotide sequence ID" value="NZ_SEKU01000016.1"/>
</dbReference>
<dbReference type="PDB" id="3O72">
    <property type="method" value="X-ray"/>
    <property type="resolution" value="1.95 A"/>
    <property type="chains" value="A/B/C/D=36-423"/>
</dbReference>
<dbReference type="PDBsum" id="3O72"/>
<dbReference type="SMR" id="Q8XAS4"/>
<dbReference type="STRING" id="155864.Z1521"/>
<dbReference type="PeroxiBase" id="5880">
    <property type="entry name" value="EcoH7DyPrx01"/>
</dbReference>
<dbReference type="GeneID" id="912778"/>
<dbReference type="KEGG" id="ece:Z1521"/>
<dbReference type="KEGG" id="ecs:ECs_1265"/>
<dbReference type="PATRIC" id="fig|386585.9.peg.1372"/>
<dbReference type="eggNOG" id="COG2837">
    <property type="taxonomic scope" value="Bacteria"/>
</dbReference>
<dbReference type="HOGENOM" id="CLU_039488_0_0_6"/>
<dbReference type="OMA" id="QACANDP"/>
<dbReference type="EvolutionaryTrace" id="Q8XAS4"/>
<dbReference type="Proteomes" id="UP000000558">
    <property type="component" value="Chromosome"/>
</dbReference>
<dbReference type="Proteomes" id="UP000002519">
    <property type="component" value="Chromosome"/>
</dbReference>
<dbReference type="GO" id="GO:0005829">
    <property type="term" value="C:cytosol"/>
    <property type="evidence" value="ECO:0007669"/>
    <property type="project" value="TreeGrafter"/>
</dbReference>
<dbReference type="GO" id="GO:0042597">
    <property type="term" value="C:periplasmic space"/>
    <property type="evidence" value="ECO:0007669"/>
    <property type="project" value="UniProtKB-SubCell"/>
</dbReference>
<dbReference type="GO" id="GO:0004325">
    <property type="term" value="F:ferrochelatase activity"/>
    <property type="evidence" value="ECO:0007669"/>
    <property type="project" value="RHEA"/>
</dbReference>
<dbReference type="GO" id="GO:0020037">
    <property type="term" value="F:heme binding"/>
    <property type="evidence" value="ECO:0007669"/>
    <property type="project" value="InterPro"/>
</dbReference>
<dbReference type="GO" id="GO:0046872">
    <property type="term" value="F:metal ion binding"/>
    <property type="evidence" value="ECO:0007669"/>
    <property type="project" value="UniProtKB-KW"/>
</dbReference>
<dbReference type="GO" id="GO:0004601">
    <property type="term" value="F:peroxidase activity"/>
    <property type="evidence" value="ECO:0007669"/>
    <property type="project" value="UniProtKB-KW"/>
</dbReference>
<dbReference type="GO" id="GO:0033212">
    <property type="term" value="P:iron import into cell"/>
    <property type="evidence" value="ECO:0007669"/>
    <property type="project" value="InterPro"/>
</dbReference>
<dbReference type="InterPro" id="IPR011008">
    <property type="entry name" value="Dimeric_a/b-barrel"/>
</dbReference>
<dbReference type="InterPro" id="IPR048328">
    <property type="entry name" value="Dyp_perox_C"/>
</dbReference>
<dbReference type="InterPro" id="IPR048327">
    <property type="entry name" value="Dyp_perox_N"/>
</dbReference>
<dbReference type="InterPro" id="IPR006314">
    <property type="entry name" value="Dyp_peroxidase"/>
</dbReference>
<dbReference type="InterPro" id="IPR006313">
    <property type="entry name" value="EfeB/EfeN"/>
</dbReference>
<dbReference type="InterPro" id="IPR006311">
    <property type="entry name" value="TAT_signal"/>
</dbReference>
<dbReference type="NCBIfam" id="TIGR01413">
    <property type="entry name" value="Dyp_perox_fam"/>
    <property type="match status" value="1"/>
</dbReference>
<dbReference type="NCBIfam" id="TIGR01412">
    <property type="entry name" value="tat_substr_1"/>
    <property type="match status" value="1"/>
</dbReference>
<dbReference type="PANTHER" id="PTHR30521:SF4">
    <property type="entry name" value="DEFERROCHELATASE"/>
    <property type="match status" value="1"/>
</dbReference>
<dbReference type="PANTHER" id="PTHR30521">
    <property type="entry name" value="DEFERROCHELATASE/PEROXIDASE"/>
    <property type="match status" value="1"/>
</dbReference>
<dbReference type="Pfam" id="PF20628">
    <property type="entry name" value="Dyp_perox_C"/>
    <property type="match status" value="1"/>
</dbReference>
<dbReference type="Pfam" id="PF04261">
    <property type="entry name" value="Dyp_perox_N"/>
    <property type="match status" value="1"/>
</dbReference>
<dbReference type="SUPFAM" id="SSF54909">
    <property type="entry name" value="Dimeric alpha+beta barrel"/>
    <property type="match status" value="1"/>
</dbReference>
<dbReference type="PROSITE" id="PS51404">
    <property type="entry name" value="DYP_PEROXIDASE"/>
    <property type="match status" value="1"/>
</dbReference>
<dbReference type="PROSITE" id="PS51318">
    <property type="entry name" value="TAT"/>
    <property type="match status" value="1"/>
</dbReference>
<gene>
    <name type="primary">efeB</name>
    <name type="synonym">ycdB</name>
    <name type="ordered locus">Z1521</name>
    <name type="ordered locus">ECs1265</name>
</gene>
<name>EFEB_ECO57</name>
<comment type="function">
    <text evidence="4">Involved in the recovery of exogenous heme iron. Extracts iron from heme while preserving the protoporphyrin ring intact. Also displays peroxidase activity on guaiacol and catechol in vitro. The deferrochelatase activity appears to be closely related to the peroxidation activity, but the link is unclear.</text>
</comment>
<comment type="catalytic activity">
    <reaction evidence="4">
        <text>heme b + 2 H(+) = protoporphyrin IX + Fe(2+)</text>
        <dbReference type="Rhea" id="RHEA:22584"/>
        <dbReference type="ChEBI" id="CHEBI:15378"/>
        <dbReference type="ChEBI" id="CHEBI:29033"/>
        <dbReference type="ChEBI" id="CHEBI:57306"/>
        <dbReference type="ChEBI" id="CHEBI:60344"/>
        <dbReference type="EC" id="4.98.1.1"/>
    </reaction>
    <physiologicalReaction direction="left-to-right" evidence="4">
        <dbReference type="Rhea" id="RHEA:22585"/>
    </physiologicalReaction>
</comment>
<comment type="cofactor">
    <cofactor evidence="4">
        <name>heme b</name>
        <dbReference type="ChEBI" id="CHEBI:60344"/>
    </cofactor>
    <text evidence="4">Binds 1 heme b (iron(II)-protoporphyrin IX) group non-covalently per subunit.</text>
</comment>
<comment type="subunit">
    <text evidence="3 4">The heme-bound EfeB forms a homodimer whereas the apo-form mainly exists as a monomer. Part of a ferrous iron transporter composed of EfeU, EfeO and EfeB.</text>
</comment>
<comment type="subcellular location">
    <subcellularLocation>
        <location evidence="1">Periplasm</location>
    </subcellularLocation>
</comment>
<comment type="PTM">
    <text>Predicted to be exported by the Tat system. The position of the signal peptide cleavage has not been experimentally proven.</text>
</comment>
<comment type="similarity">
    <text evidence="5">Belongs to the DyP-type peroxidase family. EfeB subfamily.</text>
</comment>
<proteinExistence type="evidence at protein level"/>
<sequence length="423" mass="46620">MQYEDKNGVNEPSRRRLLKGIGALALAGSCPVAHAQKTQSAPGTLSPVARNEKQPFYGEHQAGILTPQQAAMMLVAFDVLASDKADLERLFRLLTQRFAFLTQGGAAPETPNPRLPPLDSGILGGYIAPDNLTITLSVGHSLFDERFGLAPQMPKKLQKMTRFPNDSLDAALCHGDVLLQICANTQDTVIHALRDIIKHTPDLLSVRWKREGFISDHAARSKGKETPINLLGFKDGTANPDSQNDKLMQKVVWVTADQQEPAWTIGGSYQAVRLIQFRVEFWDRTPLKEQQTIFGRDKQTGAPLGMQHEHDVPDYASDPEGKGIALDSHIRLANPRTAESESSLMLRRGYSYSLGVTNSGQLDMGLLFVCYQHDLEKGFLTVQKRLNGEALEEYVKPIGGGYFFALPGVKDANDYLGSALLRV</sequence>
<reference key="1">
    <citation type="journal article" date="2001" name="Nature">
        <title>Genome sequence of enterohaemorrhagic Escherichia coli O157:H7.</title>
        <authorList>
            <person name="Perna N.T."/>
            <person name="Plunkett G. III"/>
            <person name="Burland V."/>
            <person name="Mau B."/>
            <person name="Glasner J.D."/>
            <person name="Rose D.J."/>
            <person name="Mayhew G.F."/>
            <person name="Evans P.S."/>
            <person name="Gregor J."/>
            <person name="Kirkpatrick H.A."/>
            <person name="Posfai G."/>
            <person name="Hackett J."/>
            <person name="Klink S."/>
            <person name="Boutin A."/>
            <person name="Shao Y."/>
            <person name="Miller L."/>
            <person name="Grotbeck E.J."/>
            <person name="Davis N.W."/>
            <person name="Lim A."/>
            <person name="Dimalanta E.T."/>
            <person name="Potamousis K."/>
            <person name="Apodaca J."/>
            <person name="Anantharaman T.S."/>
            <person name="Lin J."/>
            <person name="Yen G."/>
            <person name="Schwartz D.C."/>
            <person name="Welch R.A."/>
            <person name="Blattner F.R."/>
        </authorList>
    </citation>
    <scope>NUCLEOTIDE SEQUENCE [LARGE SCALE GENOMIC DNA]</scope>
    <source>
        <strain>O157:H7 / EDL933 / ATCC 700927 / EHEC</strain>
    </source>
</reference>
<reference key="2">
    <citation type="journal article" date="2001" name="DNA Res.">
        <title>Complete genome sequence of enterohemorrhagic Escherichia coli O157:H7 and genomic comparison with a laboratory strain K-12.</title>
        <authorList>
            <person name="Hayashi T."/>
            <person name="Makino K."/>
            <person name="Ohnishi M."/>
            <person name="Kurokawa K."/>
            <person name="Ishii K."/>
            <person name="Yokoyama K."/>
            <person name="Han C.-G."/>
            <person name="Ohtsubo E."/>
            <person name="Nakayama K."/>
            <person name="Murata T."/>
            <person name="Tanaka M."/>
            <person name="Tobe T."/>
            <person name="Iida T."/>
            <person name="Takami H."/>
            <person name="Honda T."/>
            <person name="Sasakawa C."/>
            <person name="Ogasawara N."/>
            <person name="Yasunaga T."/>
            <person name="Kuhara S."/>
            <person name="Shiba T."/>
            <person name="Hattori M."/>
            <person name="Shinagawa H."/>
        </authorList>
    </citation>
    <scope>NUCLEOTIDE SEQUENCE [LARGE SCALE GENOMIC DNA]</scope>
    <source>
        <strain>O157:H7 / Sakai / RIMD 0509952 / EHEC</strain>
    </source>
</reference>
<reference key="3">
    <citation type="journal article" date="2007" name="Mol. Microbiol.">
        <title>EfeUOB (YcdNOB) is a tripartite, acid-induced and CpxAR-regulated, low-pH Fe2+ transporter that is cryptic in Escherichia coli K-12 but functional in E. coli O157:H7.</title>
        <authorList>
            <person name="Cao J."/>
            <person name="Woodhall M.R."/>
            <person name="Alvarez J."/>
            <person name="Cartron M.L."/>
            <person name="Andrews S.C."/>
        </authorList>
    </citation>
    <scope>SUBUNIT</scope>
    <source>
        <strain>O157:H7 / EDL933 / ATCC 700927 / EHEC</strain>
    </source>
</reference>
<reference evidence="7" key="4">
    <citation type="journal article" date="2011" name="J. Biol. Chem.">
        <title>Crystal structure and biochemical features of EfeB/YcdB from Escherichia coli O157: ASP235 plays divergent roles in different enzyme-catalyzed processes.</title>
        <authorList>
            <person name="Liu X."/>
            <person name="Du Q."/>
            <person name="Wang Z."/>
            <person name="Zhu D."/>
            <person name="Huang Y."/>
            <person name="Li N."/>
            <person name="Wei T."/>
            <person name="Xu S."/>
            <person name="Gu L."/>
        </authorList>
    </citation>
    <scope>X-RAY CRYSTALLOGRAPHY (1.95 ANGSTROMS) OF 36-423 IN COMPLEX WITH HEME</scope>
    <scope>FUNCTION AS A DEFERROCHELATASE AND PEROXIDASE</scope>
    <scope>CATALYTIC ACTIVITY</scope>
    <scope>COFACTOR</scope>
    <scope>SUBUNIT</scope>
    <scope>MUTAGENESIS OF GLN-68; GLY-223; PRO-227; ASP-235; GLY-236; ASN-239; HIS-329; LEU-346; ARG-347; GLY-349; SER-351; LEU-366 AND PHE-368</scope>
    <source>
        <strain>O157:H7 / EHEC</strain>
    </source>
</reference>
<evidence type="ECO:0000250" key="1"/>
<evidence type="ECO:0000255" key="2">
    <source>
        <dbReference type="PROSITE-ProRule" id="PRU00648"/>
    </source>
</evidence>
<evidence type="ECO:0000269" key="3">
    <source>
    </source>
</evidence>
<evidence type="ECO:0000269" key="4">
    <source>
    </source>
</evidence>
<evidence type="ECO:0000305" key="5"/>
<evidence type="ECO:0000305" key="6">
    <source>
    </source>
</evidence>
<evidence type="ECO:0007744" key="7">
    <source>
        <dbReference type="PDB" id="3O72"/>
    </source>
</evidence>
<evidence type="ECO:0007829" key="8">
    <source>
        <dbReference type="PDB" id="3O72"/>
    </source>
</evidence>